<dbReference type="EC" id="4.1.1.37" evidence="1"/>
<dbReference type="EMBL" id="CP000046">
    <property type="protein sequence ID" value="AAW36902.1"/>
    <property type="molecule type" value="Genomic_DNA"/>
</dbReference>
<dbReference type="RefSeq" id="WP_000233526.1">
    <property type="nucleotide sequence ID" value="NZ_JBGOFO010000011.1"/>
</dbReference>
<dbReference type="SMR" id="Q5HEU2"/>
<dbReference type="KEGG" id="sac:SACOL1889"/>
<dbReference type="HOGENOM" id="CLU_040933_0_1_9"/>
<dbReference type="UniPathway" id="UPA00251">
    <property type="reaction ID" value="UER00321"/>
</dbReference>
<dbReference type="Proteomes" id="UP000000530">
    <property type="component" value="Chromosome"/>
</dbReference>
<dbReference type="GO" id="GO:0005829">
    <property type="term" value="C:cytosol"/>
    <property type="evidence" value="ECO:0007669"/>
    <property type="project" value="TreeGrafter"/>
</dbReference>
<dbReference type="GO" id="GO:0004853">
    <property type="term" value="F:uroporphyrinogen decarboxylase activity"/>
    <property type="evidence" value="ECO:0007669"/>
    <property type="project" value="UniProtKB-UniRule"/>
</dbReference>
<dbReference type="GO" id="GO:0006782">
    <property type="term" value="P:protoporphyrinogen IX biosynthetic process"/>
    <property type="evidence" value="ECO:0007669"/>
    <property type="project" value="UniProtKB-UniRule"/>
</dbReference>
<dbReference type="CDD" id="cd00717">
    <property type="entry name" value="URO-D"/>
    <property type="match status" value="1"/>
</dbReference>
<dbReference type="FunFam" id="3.20.20.210:FF:000005">
    <property type="entry name" value="Uroporphyrinogen decarboxylase"/>
    <property type="match status" value="1"/>
</dbReference>
<dbReference type="Gene3D" id="3.20.20.210">
    <property type="match status" value="1"/>
</dbReference>
<dbReference type="HAMAP" id="MF_00218">
    <property type="entry name" value="URO_D"/>
    <property type="match status" value="1"/>
</dbReference>
<dbReference type="InterPro" id="IPR038071">
    <property type="entry name" value="UROD/MetE-like_sf"/>
</dbReference>
<dbReference type="InterPro" id="IPR006361">
    <property type="entry name" value="Uroporphyrinogen_deCO2ase_HemE"/>
</dbReference>
<dbReference type="InterPro" id="IPR000257">
    <property type="entry name" value="Uroporphyrinogen_deCOase"/>
</dbReference>
<dbReference type="NCBIfam" id="TIGR01464">
    <property type="entry name" value="hemE"/>
    <property type="match status" value="1"/>
</dbReference>
<dbReference type="PANTHER" id="PTHR21091">
    <property type="entry name" value="METHYLTETRAHYDROFOLATE:HOMOCYSTEINE METHYLTRANSFERASE RELATED"/>
    <property type="match status" value="1"/>
</dbReference>
<dbReference type="PANTHER" id="PTHR21091:SF169">
    <property type="entry name" value="UROPORPHYRINOGEN DECARBOXYLASE"/>
    <property type="match status" value="1"/>
</dbReference>
<dbReference type="Pfam" id="PF01208">
    <property type="entry name" value="URO-D"/>
    <property type="match status" value="1"/>
</dbReference>
<dbReference type="SUPFAM" id="SSF51726">
    <property type="entry name" value="UROD/MetE-like"/>
    <property type="match status" value="1"/>
</dbReference>
<dbReference type="PROSITE" id="PS00906">
    <property type="entry name" value="UROD_1"/>
    <property type="match status" value="1"/>
</dbReference>
<dbReference type="PROSITE" id="PS00907">
    <property type="entry name" value="UROD_2"/>
    <property type="match status" value="1"/>
</dbReference>
<keyword id="KW-0963">Cytoplasm</keyword>
<keyword id="KW-0210">Decarboxylase</keyword>
<keyword id="KW-0456">Lyase</keyword>
<keyword id="KW-0627">Porphyrin biosynthesis</keyword>
<feature type="chain" id="PRO_0000187639" description="Uroporphyrinogen decarboxylase">
    <location>
        <begin position="1"/>
        <end position="345"/>
    </location>
</feature>
<feature type="binding site" evidence="1">
    <location>
        <begin position="27"/>
        <end position="31"/>
    </location>
    <ligand>
        <name>substrate</name>
    </ligand>
</feature>
<feature type="binding site" evidence="1">
    <location>
        <position position="46"/>
    </location>
    <ligand>
        <name>substrate</name>
    </ligand>
</feature>
<feature type="binding site" evidence="1">
    <location>
        <position position="76"/>
    </location>
    <ligand>
        <name>substrate</name>
    </ligand>
</feature>
<feature type="binding site" evidence="1">
    <location>
        <position position="152"/>
    </location>
    <ligand>
        <name>substrate</name>
    </ligand>
</feature>
<feature type="binding site" evidence="1">
    <location>
        <position position="207"/>
    </location>
    <ligand>
        <name>substrate</name>
    </ligand>
</feature>
<feature type="binding site" evidence="1">
    <location>
        <position position="321"/>
    </location>
    <ligand>
        <name>substrate</name>
    </ligand>
</feature>
<feature type="site" description="Transition state stabilizer" evidence="1">
    <location>
        <position position="76"/>
    </location>
</feature>
<organism>
    <name type="scientific">Staphylococcus aureus (strain COL)</name>
    <dbReference type="NCBI Taxonomy" id="93062"/>
    <lineage>
        <taxon>Bacteria</taxon>
        <taxon>Bacillati</taxon>
        <taxon>Bacillota</taxon>
        <taxon>Bacilli</taxon>
        <taxon>Bacillales</taxon>
        <taxon>Staphylococcaceae</taxon>
        <taxon>Staphylococcus</taxon>
    </lineage>
</organism>
<name>DCUP_STAAC</name>
<gene>
    <name evidence="1" type="primary">hemE</name>
    <name type="ordered locus">SACOL1889</name>
</gene>
<comment type="function">
    <text evidence="1">Catalyzes the decarboxylation of four acetate groups of uroporphyrinogen-III to yield coproporphyrinogen-III.</text>
</comment>
<comment type="catalytic activity">
    <reaction evidence="1">
        <text>uroporphyrinogen III + 4 H(+) = coproporphyrinogen III + 4 CO2</text>
        <dbReference type="Rhea" id="RHEA:19865"/>
        <dbReference type="ChEBI" id="CHEBI:15378"/>
        <dbReference type="ChEBI" id="CHEBI:16526"/>
        <dbReference type="ChEBI" id="CHEBI:57308"/>
        <dbReference type="ChEBI" id="CHEBI:57309"/>
        <dbReference type="EC" id="4.1.1.37"/>
    </reaction>
</comment>
<comment type="pathway">
    <text evidence="1">Porphyrin-containing compound metabolism; protoporphyrin-IX biosynthesis; coproporphyrinogen-III from 5-aminolevulinate: step 4/4.</text>
</comment>
<comment type="subunit">
    <text evidence="1">Homodimer.</text>
</comment>
<comment type="subcellular location">
    <subcellularLocation>
        <location evidence="1">Cytoplasm</location>
    </subcellularLocation>
</comment>
<comment type="similarity">
    <text evidence="1">Belongs to the uroporphyrinogen decarboxylase family.</text>
</comment>
<accession>Q5HEU2</accession>
<reference key="1">
    <citation type="journal article" date="2005" name="J. Bacteriol.">
        <title>Insights on evolution of virulence and resistance from the complete genome analysis of an early methicillin-resistant Staphylococcus aureus strain and a biofilm-producing methicillin-resistant Staphylococcus epidermidis strain.</title>
        <authorList>
            <person name="Gill S.R."/>
            <person name="Fouts D.E."/>
            <person name="Archer G.L."/>
            <person name="Mongodin E.F."/>
            <person name="DeBoy R.T."/>
            <person name="Ravel J."/>
            <person name="Paulsen I.T."/>
            <person name="Kolonay J.F."/>
            <person name="Brinkac L.M."/>
            <person name="Beanan M.J."/>
            <person name="Dodson R.J."/>
            <person name="Daugherty S.C."/>
            <person name="Madupu R."/>
            <person name="Angiuoli S.V."/>
            <person name="Durkin A.S."/>
            <person name="Haft D.H."/>
            <person name="Vamathevan J.J."/>
            <person name="Khouri H."/>
            <person name="Utterback T.R."/>
            <person name="Lee C."/>
            <person name="Dimitrov G."/>
            <person name="Jiang L."/>
            <person name="Qin H."/>
            <person name="Weidman J."/>
            <person name="Tran K."/>
            <person name="Kang K.H."/>
            <person name="Hance I.R."/>
            <person name="Nelson K.E."/>
            <person name="Fraser C.M."/>
        </authorList>
    </citation>
    <scope>NUCLEOTIDE SEQUENCE [LARGE SCALE GENOMIC DNA]</scope>
    <source>
        <strain>COL</strain>
    </source>
</reference>
<sequence>MVHNKNNTILKMIKGEETSHTPVWFMRQAGRSQPEYRKLKEKYSLFDITHQPELCAYVTHLPVDNYHTDAAILYKDIMTPLKPIGVDVEIKSGIGPVIHNPIKTIQDVEKLSQIDPERDVPYVLDTIKLLTEEKLNVPLIGFTGAPFTLASYMIEGGPSKNYNFTKAMMYRDEATWFALMNHLVDVSVKYVTAQVEAGAELIQIFDSWVGALNVEDYRRYIKPHMIRLISEVKEKHDVPVILFGVGASHLINEWNDLPIDVLGLDWRTSINQAQQLGVTKTLQGNLDPSILLAPWNVIEERLKPILDQGMENGKHIFNLGHGVFPEVQPETLRKVSEFVHTYTQR</sequence>
<proteinExistence type="inferred from homology"/>
<protein>
    <recommendedName>
        <fullName evidence="1">Uroporphyrinogen decarboxylase</fullName>
        <shortName evidence="1">UPD</shortName>
        <shortName evidence="1">URO-D</shortName>
        <ecNumber evidence="1">4.1.1.37</ecNumber>
    </recommendedName>
</protein>
<evidence type="ECO:0000255" key="1">
    <source>
        <dbReference type="HAMAP-Rule" id="MF_00218"/>
    </source>
</evidence>